<keyword id="KW-0238">DNA-binding</keyword>
<keyword id="KW-0539">Nucleus</keyword>
<keyword id="KW-1185">Reference proteome</keyword>
<keyword id="KW-0346">Stress response</keyword>
<keyword id="KW-0804">Transcription</keyword>
<keyword id="KW-0805">Transcription regulation</keyword>
<feature type="chain" id="PRO_0000397872" description="Ethylene-responsive transcription factor ABI4">
    <location>
        <begin position="1"/>
        <end position="269"/>
    </location>
</feature>
<feature type="DNA-binding region" description="AP2/ERF" evidence="2">
    <location>
        <begin position="49"/>
        <end position="106"/>
    </location>
</feature>
<feature type="region of interest" description="Disordered" evidence="3">
    <location>
        <begin position="1"/>
        <end position="53"/>
    </location>
</feature>
<feature type="region of interest" description="Disordered" evidence="3">
    <location>
        <begin position="106"/>
        <end position="153"/>
    </location>
</feature>
<feature type="compositionally biased region" description="Low complexity" evidence="3">
    <location>
        <begin position="11"/>
        <end position="22"/>
    </location>
</feature>
<feature type="compositionally biased region" description="Pro residues" evidence="3">
    <location>
        <begin position="107"/>
        <end position="117"/>
    </location>
</feature>
<feature type="compositionally biased region" description="Low complexity" evidence="3">
    <location>
        <begin position="118"/>
        <end position="136"/>
    </location>
</feature>
<proteinExistence type="inferred from homology"/>
<organism>
    <name type="scientific">Oryza sativa subsp. japonica</name>
    <name type="common">Rice</name>
    <dbReference type="NCBI Taxonomy" id="39947"/>
    <lineage>
        <taxon>Eukaryota</taxon>
        <taxon>Viridiplantae</taxon>
        <taxon>Streptophyta</taxon>
        <taxon>Embryophyta</taxon>
        <taxon>Tracheophyta</taxon>
        <taxon>Spermatophyta</taxon>
        <taxon>Magnoliopsida</taxon>
        <taxon>Liliopsida</taxon>
        <taxon>Poales</taxon>
        <taxon>Poaceae</taxon>
        <taxon>BOP clade</taxon>
        <taxon>Oryzoideae</taxon>
        <taxon>Oryzeae</taxon>
        <taxon>Oryzinae</taxon>
        <taxon>Oryza</taxon>
        <taxon>Oryza sativa</taxon>
    </lineage>
</organism>
<name>ABI4_ORYSJ</name>
<protein>
    <recommendedName>
        <fullName>Ethylene-responsive transcription factor ABI4</fullName>
    </recommendedName>
    <alternativeName>
        <fullName>ERF ABI4</fullName>
    </alternativeName>
    <alternativeName>
        <fullName>Protein ABI4 homolog</fullName>
        <shortName>OsABI4</shortName>
    </alternativeName>
</protein>
<comment type="function">
    <text evidence="1">Probable transcription regulator that binds to cis-responsive elements of genes involved in stress response.</text>
</comment>
<comment type="subcellular location">
    <subcellularLocation>
        <location evidence="2 4">Nucleus</location>
    </subcellularLocation>
</comment>
<comment type="similarity">
    <text evidence="5">Belongs to the AP2/ERF transcription factor family. ERF subfamily.</text>
</comment>
<comment type="sequence caution" evidence="5">
    <conflict type="erroneous gene model prediction">
        <sequence resource="EMBL-CDS" id="AAV44075"/>
    </conflict>
</comment>
<gene>
    <name type="primary">ABI4</name>
    <name type="synonym">ERF117</name>
    <name type="ordered locus">Os05g0351200</name>
    <name type="ordered locus">LOC_Os05g28350</name>
    <name type="ORF">OSJNBa0077J17.14</name>
</gene>
<reference key="1">
    <citation type="journal article" date="2005" name="Mol. Genet. Genomics">
        <title>A fine physical map of the rice chromosome 5.</title>
        <authorList>
            <person name="Cheng C.-H."/>
            <person name="Chung M.C."/>
            <person name="Liu S.-M."/>
            <person name="Chen S.-K."/>
            <person name="Kao F.Y."/>
            <person name="Lin S.-J."/>
            <person name="Hsiao S.-H."/>
            <person name="Tseng I.C."/>
            <person name="Hsing Y.-I.C."/>
            <person name="Wu H.-P."/>
            <person name="Chen C.-S."/>
            <person name="Shaw J.-F."/>
            <person name="Wu J."/>
            <person name="Matsumoto T."/>
            <person name="Sasaki T."/>
            <person name="Chen H.-C."/>
            <person name="Chow T.-Y."/>
        </authorList>
    </citation>
    <scope>NUCLEOTIDE SEQUENCE [LARGE SCALE GENOMIC DNA]</scope>
    <source>
        <strain>cv. Nipponbare</strain>
    </source>
</reference>
<reference key="2">
    <citation type="journal article" date="2005" name="Nature">
        <title>The map-based sequence of the rice genome.</title>
        <authorList>
            <consortium name="International rice genome sequencing project (IRGSP)"/>
        </authorList>
    </citation>
    <scope>NUCLEOTIDE SEQUENCE [LARGE SCALE GENOMIC DNA]</scope>
    <source>
        <strain>cv. Nipponbare</strain>
    </source>
</reference>
<reference key="3">
    <citation type="journal article" date="2008" name="Nucleic Acids Res.">
        <title>The rice annotation project database (RAP-DB): 2008 update.</title>
        <authorList>
            <consortium name="The rice annotation project (RAP)"/>
        </authorList>
    </citation>
    <scope>GENOME REANNOTATION</scope>
    <source>
        <strain>cv. Nipponbare</strain>
    </source>
</reference>
<reference key="4">
    <citation type="journal article" date="2013" name="Rice">
        <title>Improvement of the Oryza sativa Nipponbare reference genome using next generation sequence and optical map data.</title>
        <authorList>
            <person name="Kawahara Y."/>
            <person name="de la Bastide M."/>
            <person name="Hamilton J.P."/>
            <person name="Kanamori H."/>
            <person name="McCombie W.R."/>
            <person name="Ouyang S."/>
            <person name="Schwartz D.C."/>
            <person name="Tanaka T."/>
            <person name="Wu J."/>
            <person name="Zhou S."/>
            <person name="Childs K.L."/>
            <person name="Davidson R.M."/>
            <person name="Lin H."/>
            <person name="Quesada-Ocampo L."/>
            <person name="Vaillancourt B."/>
            <person name="Sakai H."/>
            <person name="Lee S.S."/>
            <person name="Kim J."/>
            <person name="Numa H."/>
            <person name="Itoh T."/>
            <person name="Buell C.R."/>
            <person name="Matsumoto T."/>
        </authorList>
    </citation>
    <scope>GENOME REANNOTATION</scope>
    <source>
        <strain>cv. Nipponbare</strain>
    </source>
</reference>
<reference key="5">
    <citation type="journal article" date="2010" name="Mol. Genet. Genomics">
        <title>Comprehensive analysis of rice DREB2-type genes that encode transcription factors involved in the expression of abiotic stress-responsive genes.</title>
        <authorList>
            <person name="Matsukura S."/>
            <person name="Mizoi J."/>
            <person name="Yoshida T."/>
            <person name="Todaka D."/>
            <person name="Ito Y."/>
            <person name="Maruyama K."/>
            <person name="Shinozaki K."/>
            <person name="Yamaguchi-Shinozaki K."/>
        </authorList>
    </citation>
    <scope>SUBCELLULAR LOCATION</scope>
</reference>
<evidence type="ECO:0000250" key="1"/>
<evidence type="ECO:0000255" key="2">
    <source>
        <dbReference type="PROSITE-ProRule" id="PRU00366"/>
    </source>
</evidence>
<evidence type="ECO:0000256" key="3">
    <source>
        <dbReference type="SAM" id="MobiDB-lite"/>
    </source>
</evidence>
<evidence type="ECO:0000269" key="4">
    <source>
    </source>
</evidence>
<evidence type="ECO:0000305" key="5"/>
<sequence length="269" mass="27627">MEPSDDACTVAAPAAETAASSSGAGGGGGGGRTKKKAAGKGGPENGKFRYRGVRQRSWGKWVAEIREPRKRSRKWLGTFATAEDAARAYDRAALLLYGPRAHLNLTAPPPLPPPPPSSAAAAAASSSSAASSTSAPPLRPLLPRPPHLHPAFHHQPFHHHLLQPQPPPPPPPLYYAATASTSTVTTTTTAPPPQLAAAAPAAVLVAAAVSSTAETQAVVATAPEDAASAAAAAAAEEEAAWGFHGGDEEDYAAALLWSEPDPWFDLFLK</sequence>
<dbReference type="EMBL" id="AC136221">
    <property type="protein sequence ID" value="AAV44075.1"/>
    <property type="status" value="ALT_SEQ"/>
    <property type="molecule type" value="Genomic_DNA"/>
</dbReference>
<dbReference type="EMBL" id="AP008211">
    <property type="protein sequence ID" value="BAH93104.1"/>
    <property type="molecule type" value="Genomic_DNA"/>
</dbReference>
<dbReference type="EMBL" id="AP014961">
    <property type="protein sequence ID" value="BAS93538.1"/>
    <property type="molecule type" value="Genomic_DNA"/>
</dbReference>
<dbReference type="SMR" id="C7J2Z1"/>
<dbReference type="FunCoup" id="C7J2Z1">
    <property type="interactions" value="126"/>
</dbReference>
<dbReference type="STRING" id="39947.C7J2Z1"/>
<dbReference type="PaxDb" id="39947-C7J2Z1"/>
<dbReference type="EnsemblPlants" id="Os05t0351200-00">
    <property type="protein sequence ID" value="Os05t0351200-00"/>
    <property type="gene ID" value="Os05g0351200"/>
</dbReference>
<dbReference type="Gramene" id="Os05t0351200-00">
    <property type="protein sequence ID" value="Os05t0351200-00"/>
    <property type="gene ID" value="Os05g0351200"/>
</dbReference>
<dbReference type="KEGG" id="dosa:Os05g0351200"/>
<dbReference type="eggNOG" id="ENOG502QT85">
    <property type="taxonomic scope" value="Eukaryota"/>
</dbReference>
<dbReference type="HOGENOM" id="CLU_1099874_0_0_1"/>
<dbReference type="InParanoid" id="C7J2Z1"/>
<dbReference type="OMA" id="EAAWGFH"/>
<dbReference type="OrthoDB" id="1938645at2759"/>
<dbReference type="Proteomes" id="UP000000763">
    <property type="component" value="Chromosome 5"/>
</dbReference>
<dbReference type="Proteomes" id="UP000059680">
    <property type="component" value="Chromosome 5"/>
</dbReference>
<dbReference type="GO" id="GO:0005634">
    <property type="term" value="C:nucleus"/>
    <property type="evidence" value="ECO:0000314"/>
    <property type="project" value="UniProtKB"/>
</dbReference>
<dbReference type="GO" id="GO:0003700">
    <property type="term" value="F:DNA-binding transcription factor activity"/>
    <property type="evidence" value="ECO:0000318"/>
    <property type="project" value="GO_Central"/>
</dbReference>
<dbReference type="GO" id="GO:0000976">
    <property type="term" value="F:transcription cis-regulatory region binding"/>
    <property type="evidence" value="ECO:0000318"/>
    <property type="project" value="GO_Central"/>
</dbReference>
<dbReference type="GO" id="GO:0045893">
    <property type="term" value="P:positive regulation of DNA-templated transcription"/>
    <property type="evidence" value="ECO:0000318"/>
    <property type="project" value="GO_Central"/>
</dbReference>
<dbReference type="GO" id="GO:0006950">
    <property type="term" value="P:response to stress"/>
    <property type="evidence" value="ECO:0000318"/>
    <property type="project" value="GO_Central"/>
</dbReference>
<dbReference type="CDD" id="cd00018">
    <property type="entry name" value="AP2"/>
    <property type="match status" value="1"/>
</dbReference>
<dbReference type="FunFam" id="3.30.730.10:FF:000001">
    <property type="entry name" value="Ethylene-responsive transcription factor 2"/>
    <property type="match status" value="1"/>
</dbReference>
<dbReference type="Gene3D" id="3.30.730.10">
    <property type="entry name" value="AP2/ERF domain"/>
    <property type="match status" value="1"/>
</dbReference>
<dbReference type="InterPro" id="IPR001471">
    <property type="entry name" value="AP2/ERF_dom"/>
</dbReference>
<dbReference type="InterPro" id="IPR036955">
    <property type="entry name" value="AP2/ERF_dom_sf"/>
</dbReference>
<dbReference type="InterPro" id="IPR016177">
    <property type="entry name" value="DNA-bd_dom_sf"/>
</dbReference>
<dbReference type="PANTHER" id="PTHR31241">
    <property type="entry name" value="DEHYDRATION-RESPONSIVE ELEMENT-BINDING PROTEIN 2C"/>
    <property type="match status" value="1"/>
</dbReference>
<dbReference type="PANTHER" id="PTHR31241:SF24">
    <property type="entry name" value="ETHYLENE-RESPONSIVE TRANSCRIPTION FACTOR ABI4"/>
    <property type="match status" value="1"/>
</dbReference>
<dbReference type="Pfam" id="PF00847">
    <property type="entry name" value="AP2"/>
    <property type="match status" value="1"/>
</dbReference>
<dbReference type="PRINTS" id="PR00367">
    <property type="entry name" value="ETHRSPELEMNT"/>
</dbReference>
<dbReference type="SMART" id="SM00380">
    <property type="entry name" value="AP2"/>
    <property type="match status" value="1"/>
</dbReference>
<dbReference type="SUPFAM" id="SSF54171">
    <property type="entry name" value="DNA-binding domain"/>
    <property type="match status" value="1"/>
</dbReference>
<dbReference type="PROSITE" id="PS51032">
    <property type="entry name" value="AP2_ERF"/>
    <property type="match status" value="1"/>
</dbReference>
<accession>C7J2Z1</accession>
<accession>A0A0P0WL79</accession>
<accession>Q5W6G5</accession>